<dbReference type="EC" id="3.2.2.27" evidence="1"/>
<dbReference type="EMBL" id="BA000017">
    <property type="protein sequence ID" value="BAB56743.1"/>
    <property type="molecule type" value="Genomic_DNA"/>
</dbReference>
<dbReference type="RefSeq" id="WP_000455256.1">
    <property type="nucleotide sequence ID" value="NC_002758.2"/>
</dbReference>
<dbReference type="SMR" id="P67075"/>
<dbReference type="KEGG" id="sav:SAV0581"/>
<dbReference type="HOGENOM" id="CLU_032162_3_1_9"/>
<dbReference type="PhylomeDB" id="P67075"/>
<dbReference type="Proteomes" id="UP000002481">
    <property type="component" value="Chromosome"/>
</dbReference>
<dbReference type="GO" id="GO:0005737">
    <property type="term" value="C:cytoplasm"/>
    <property type="evidence" value="ECO:0007669"/>
    <property type="project" value="UniProtKB-SubCell"/>
</dbReference>
<dbReference type="GO" id="GO:0004844">
    <property type="term" value="F:uracil DNA N-glycosylase activity"/>
    <property type="evidence" value="ECO:0007669"/>
    <property type="project" value="UniProtKB-UniRule"/>
</dbReference>
<dbReference type="GO" id="GO:0097510">
    <property type="term" value="P:base-excision repair, AP site formation via deaminated base removal"/>
    <property type="evidence" value="ECO:0007669"/>
    <property type="project" value="TreeGrafter"/>
</dbReference>
<dbReference type="CDD" id="cd10027">
    <property type="entry name" value="UDG-F1-like"/>
    <property type="match status" value="1"/>
</dbReference>
<dbReference type="FunFam" id="3.40.470.10:FF:000001">
    <property type="entry name" value="Uracil-DNA glycosylase"/>
    <property type="match status" value="1"/>
</dbReference>
<dbReference type="Gene3D" id="3.40.470.10">
    <property type="entry name" value="Uracil-DNA glycosylase-like domain"/>
    <property type="match status" value="1"/>
</dbReference>
<dbReference type="HAMAP" id="MF_00148">
    <property type="entry name" value="UDG"/>
    <property type="match status" value="1"/>
</dbReference>
<dbReference type="InterPro" id="IPR002043">
    <property type="entry name" value="UDG_fam1"/>
</dbReference>
<dbReference type="InterPro" id="IPR018085">
    <property type="entry name" value="Ura-DNA_Glyclase_AS"/>
</dbReference>
<dbReference type="InterPro" id="IPR005122">
    <property type="entry name" value="Uracil-DNA_glycosylase-like"/>
</dbReference>
<dbReference type="InterPro" id="IPR036895">
    <property type="entry name" value="Uracil-DNA_glycosylase-like_sf"/>
</dbReference>
<dbReference type="NCBIfam" id="NF003588">
    <property type="entry name" value="PRK05254.1-1"/>
    <property type="match status" value="1"/>
</dbReference>
<dbReference type="NCBIfam" id="NF003589">
    <property type="entry name" value="PRK05254.1-2"/>
    <property type="match status" value="1"/>
</dbReference>
<dbReference type="NCBIfam" id="NF003591">
    <property type="entry name" value="PRK05254.1-4"/>
    <property type="match status" value="1"/>
</dbReference>
<dbReference type="NCBIfam" id="NF003592">
    <property type="entry name" value="PRK05254.1-5"/>
    <property type="match status" value="1"/>
</dbReference>
<dbReference type="NCBIfam" id="TIGR00628">
    <property type="entry name" value="ung"/>
    <property type="match status" value="1"/>
</dbReference>
<dbReference type="PANTHER" id="PTHR11264">
    <property type="entry name" value="URACIL-DNA GLYCOSYLASE"/>
    <property type="match status" value="1"/>
</dbReference>
<dbReference type="PANTHER" id="PTHR11264:SF0">
    <property type="entry name" value="URACIL-DNA GLYCOSYLASE"/>
    <property type="match status" value="1"/>
</dbReference>
<dbReference type="Pfam" id="PF03167">
    <property type="entry name" value="UDG"/>
    <property type="match status" value="1"/>
</dbReference>
<dbReference type="SMART" id="SM00986">
    <property type="entry name" value="UDG"/>
    <property type="match status" value="1"/>
</dbReference>
<dbReference type="SMART" id="SM00987">
    <property type="entry name" value="UreE_C"/>
    <property type="match status" value="1"/>
</dbReference>
<dbReference type="SUPFAM" id="SSF52141">
    <property type="entry name" value="Uracil-DNA glycosylase-like"/>
    <property type="match status" value="1"/>
</dbReference>
<dbReference type="PROSITE" id="PS00130">
    <property type="entry name" value="U_DNA_GLYCOSYLASE"/>
    <property type="match status" value="1"/>
</dbReference>
<reference key="1">
    <citation type="journal article" date="2001" name="Lancet">
        <title>Whole genome sequencing of meticillin-resistant Staphylococcus aureus.</title>
        <authorList>
            <person name="Kuroda M."/>
            <person name="Ohta T."/>
            <person name="Uchiyama I."/>
            <person name="Baba T."/>
            <person name="Yuzawa H."/>
            <person name="Kobayashi I."/>
            <person name="Cui L."/>
            <person name="Oguchi A."/>
            <person name="Aoki K."/>
            <person name="Nagai Y."/>
            <person name="Lian J.-Q."/>
            <person name="Ito T."/>
            <person name="Kanamori M."/>
            <person name="Matsumaru H."/>
            <person name="Maruyama A."/>
            <person name="Murakami H."/>
            <person name="Hosoyama A."/>
            <person name="Mizutani-Ui Y."/>
            <person name="Takahashi N.K."/>
            <person name="Sawano T."/>
            <person name="Inoue R."/>
            <person name="Kaito C."/>
            <person name="Sekimizu K."/>
            <person name="Hirakawa H."/>
            <person name="Kuhara S."/>
            <person name="Goto S."/>
            <person name="Yabuzaki J."/>
            <person name="Kanehisa M."/>
            <person name="Yamashita A."/>
            <person name="Oshima K."/>
            <person name="Furuya K."/>
            <person name="Yoshino C."/>
            <person name="Shiba T."/>
            <person name="Hattori M."/>
            <person name="Ogasawara N."/>
            <person name="Hayashi H."/>
            <person name="Hiramatsu K."/>
        </authorList>
    </citation>
    <scope>NUCLEOTIDE SEQUENCE [LARGE SCALE GENOMIC DNA]</scope>
    <source>
        <strain>Mu50 / ATCC 700699</strain>
    </source>
</reference>
<name>UNG_STAAM</name>
<proteinExistence type="inferred from homology"/>
<protein>
    <recommendedName>
        <fullName evidence="1">Uracil-DNA glycosylase</fullName>
        <shortName evidence="1">UDG</shortName>
        <ecNumber evidence="1">3.2.2.27</ecNumber>
    </recommendedName>
</protein>
<evidence type="ECO:0000255" key="1">
    <source>
        <dbReference type="HAMAP-Rule" id="MF_00148"/>
    </source>
</evidence>
<feature type="chain" id="PRO_0000176137" description="Uracil-DNA glycosylase">
    <location>
        <begin position="1"/>
        <end position="218"/>
    </location>
</feature>
<feature type="active site" description="Proton acceptor" evidence="1">
    <location>
        <position position="59"/>
    </location>
</feature>
<comment type="function">
    <text evidence="1">Excises uracil residues from the DNA which can arise as a result of misincorporation of dUMP residues by DNA polymerase or due to deamination of cytosine.</text>
</comment>
<comment type="catalytic activity">
    <reaction evidence="1">
        <text>Hydrolyzes single-stranded DNA or mismatched double-stranded DNA and polynucleotides, releasing free uracil.</text>
        <dbReference type="EC" id="3.2.2.27"/>
    </reaction>
</comment>
<comment type="subcellular location">
    <subcellularLocation>
        <location evidence="1">Cytoplasm</location>
    </subcellularLocation>
</comment>
<comment type="similarity">
    <text evidence="1">Belongs to the uracil-DNA glycosylase (UDG) superfamily. UNG family.</text>
</comment>
<sequence length="218" mass="24937">MEWSQIFHDITTKHDFKAMHDFLEKEYSTAIVYPDRENIYQAFDLTPFENIKVVILGQDPYHGPNQAHGLAFSVQPNAKFPPSLRNMYKELADDIGCVRQTPHLQDWAREGVLLLNTVLTVRQGEANSHRDIGWETFTDEIIKAVSDYKEHVVFILWGKPAQQKIKLIDTSKHCIIKSVHPSPLSAYRGFFGSKPYSKANAYLESVGKSPINWCESEA</sequence>
<keyword id="KW-0963">Cytoplasm</keyword>
<keyword id="KW-0227">DNA damage</keyword>
<keyword id="KW-0234">DNA repair</keyword>
<keyword id="KW-0378">Hydrolase</keyword>
<accession>P67075</accession>
<accession>Q99W30</accession>
<organism>
    <name type="scientific">Staphylococcus aureus (strain Mu50 / ATCC 700699)</name>
    <dbReference type="NCBI Taxonomy" id="158878"/>
    <lineage>
        <taxon>Bacteria</taxon>
        <taxon>Bacillati</taxon>
        <taxon>Bacillota</taxon>
        <taxon>Bacilli</taxon>
        <taxon>Bacillales</taxon>
        <taxon>Staphylococcaceae</taxon>
        <taxon>Staphylococcus</taxon>
    </lineage>
</organism>
<gene>
    <name evidence="1" type="primary">ung</name>
    <name type="ordered locus">SAV0581</name>
</gene>